<organism>
    <name type="scientific">Methanocaldococcus jannaschii (strain ATCC 43067 / DSM 2661 / JAL-1 / JCM 10045 / NBRC 100440)</name>
    <name type="common">Methanococcus jannaschii</name>
    <dbReference type="NCBI Taxonomy" id="243232"/>
    <lineage>
        <taxon>Archaea</taxon>
        <taxon>Methanobacteriati</taxon>
        <taxon>Methanobacteriota</taxon>
        <taxon>Methanomada group</taxon>
        <taxon>Methanococci</taxon>
        <taxon>Methanococcales</taxon>
        <taxon>Methanocaldococcaceae</taxon>
        <taxon>Methanocaldococcus</taxon>
    </lineage>
</organism>
<comment type="function">
    <text evidence="1">Part of a complex that catalyzes the reversible cleavage of acetyl-CoA, allowing autotrophic growth from CO(2). The alpha-epsilon subcomponent functions as a carbon monoxide dehydrogenase. The precise role of the epsilon subunit is unclear; it may have a stabilizing role within the alpha(2)epsilon(2) component and/or be involved in electron transfer to FAD during a potential FAD-mediated CO oxidation.</text>
</comment>
<comment type="subunit">
    <text evidence="1">Heterotetramer of two alpha and two epsilon subunits. The ACDS complex is made up of alpha, epsilon, beta, gamma and delta subunits with a probable stoichiometry of (alpha(2)epsilon(2))(4)-beta(8)-(gamma(1)delta(1))(8).</text>
</comment>
<comment type="similarity">
    <text evidence="1">Belongs to the CdhB family.</text>
</comment>
<protein>
    <recommendedName>
        <fullName evidence="1">Acetyl-CoA decarbonylase/synthase complex subunit epsilon</fullName>
        <shortName evidence="1">ACDS complex subunit epsilon</shortName>
    </recommendedName>
    <alternativeName>
        <fullName evidence="1">ACDS complex carbon monoxide dehydrogenase subunit epsilon</fullName>
        <shortName evidence="1">ACDS CODH subunit epsilon</shortName>
    </alternativeName>
</protein>
<gene>
    <name evidence="1" type="primary">cdhB</name>
    <name type="ordered locus">MJ0154</name>
</gene>
<sequence length="146" mass="16858">MDERFIAYIPTAGSNVAHAEITSPTLVKMMIRRAKKPILILGENLEENEKELISKLIEKFNLKTIKTPEEMNLMAIMKYLASSDYDLALFTGITYYYLAQAATHLKQFSNVVTISIDKYYQPNTLYSFPNLSKEEYLDYLRKLLEG</sequence>
<reference key="1">
    <citation type="journal article" date="1996" name="Science">
        <title>Complete genome sequence of the methanogenic archaeon, Methanococcus jannaschii.</title>
        <authorList>
            <person name="Bult C.J."/>
            <person name="White O."/>
            <person name="Olsen G.J."/>
            <person name="Zhou L."/>
            <person name="Fleischmann R.D."/>
            <person name="Sutton G.G."/>
            <person name="Blake J.A."/>
            <person name="FitzGerald L.M."/>
            <person name="Clayton R.A."/>
            <person name="Gocayne J.D."/>
            <person name="Kerlavage A.R."/>
            <person name="Dougherty B.A."/>
            <person name="Tomb J.-F."/>
            <person name="Adams M.D."/>
            <person name="Reich C.I."/>
            <person name="Overbeek R."/>
            <person name="Kirkness E.F."/>
            <person name="Weinstock K.G."/>
            <person name="Merrick J.M."/>
            <person name="Glodek A."/>
            <person name="Scott J.L."/>
            <person name="Geoghagen N.S.M."/>
            <person name="Weidman J.F."/>
            <person name="Fuhrmann J.L."/>
            <person name="Nguyen D."/>
            <person name="Utterback T.R."/>
            <person name="Kelley J.M."/>
            <person name="Peterson J.D."/>
            <person name="Sadow P.W."/>
            <person name="Hanna M.C."/>
            <person name="Cotton M.D."/>
            <person name="Roberts K.M."/>
            <person name="Hurst M.A."/>
            <person name="Kaine B.P."/>
            <person name="Borodovsky M."/>
            <person name="Klenk H.-P."/>
            <person name="Fraser C.M."/>
            <person name="Smith H.O."/>
            <person name="Woese C.R."/>
            <person name="Venter J.C."/>
        </authorList>
    </citation>
    <scope>NUCLEOTIDE SEQUENCE [LARGE SCALE GENOMIC DNA]</scope>
    <source>
        <strain>ATCC 43067 / DSM 2661 / JAL-1 / JCM 10045 / NBRC 100440</strain>
    </source>
</reference>
<keyword id="KW-1185">Reference proteome</keyword>
<dbReference type="EMBL" id="L77117">
    <property type="protein sequence ID" value="AAB98136.1"/>
    <property type="molecule type" value="Genomic_DNA"/>
</dbReference>
<dbReference type="RefSeq" id="WP_010869649.1">
    <property type="nucleotide sequence ID" value="NC_000909.1"/>
</dbReference>
<dbReference type="SMR" id="P81332"/>
<dbReference type="FunCoup" id="P81332">
    <property type="interactions" value="90"/>
</dbReference>
<dbReference type="STRING" id="243232.MJ_0154"/>
<dbReference type="PaxDb" id="243232-MJ_0154"/>
<dbReference type="EnsemblBacteria" id="AAB98136">
    <property type="protein sequence ID" value="AAB98136"/>
    <property type="gene ID" value="MJ_0154"/>
</dbReference>
<dbReference type="GeneID" id="1450998"/>
<dbReference type="KEGG" id="mja:MJ_0154"/>
<dbReference type="eggNOG" id="arCOG04408">
    <property type="taxonomic scope" value="Archaea"/>
</dbReference>
<dbReference type="HOGENOM" id="CLU_1773184_0_0_2"/>
<dbReference type="InParanoid" id="P81332"/>
<dbReference type="OrthoDB" id="120588at2157"/>
<dbReference type="Proteomes" id="UP000000805">
    <property type="component" value="Chromosome"/>
</dbReference>
<dbReference type="GO" id="GO:0019385">
    <property type="term" value="P:methanogenesis, from acetate"/>
    <property type="evidence" value="ECO:0007669"/>
    <property type="project" value="InterPro"/>
</dbReference>
<dbReference type="Gene3D" id="3.40.50.1220">
    <property type="entry name" value="TPP-binding domain"/>
    <property type="match status" value="1"/>
</dbReference>
<dbReference type="HAMAP" id="MF_01134">
    <property type="entry name" value="CdhB"/>
    <property type="match status" value="1"/>
</dbReference>
<dbReference type="InterPro" id="IPR003704">
    <property type="entry name" value="CdhB"/>
</dbReference>
<dbReference type="InterPro" id="IPR029035">
    <property type="entry name" value="DHS-like_NAD/FAD-binding_dom"/>
</dbReference>
<dbReference type="NCBIfam" id="TIGR00315">
    <property type="entry name" value="cdhB"/>
    <property type="match status" value="1"/>
</dbReference>
<dbReference type="Pfam" id="PF02552">
    <property type="entry name" value="CO_dh"/>
    <property type="match status" value="1"/>
</dbReference>
<dbReference type="PIRSF" id="PIRSF006035">
    <property type="entry name" value="CO_dh_b_ACDS_e"/>
    <property type="match status" value="1"/>
</dbReference>
<dbReference type="SUPFAM" id="SSF52467">
    <property type="entry name" value="DHS-like NAD/FAD-binding domain"/>
    <property type="match status" value="1"/>
</dbReference>
<name>ACDE_METJA</name>
<accession>P81332</accession>
<proteinExistence type="inferred from homology"/>
<evidence type="ECO:0000255" key="1">
    <source>
        <dbReference type="HAMAP-Rule" id="MF_01134"/>
    </source>
</evidence>
<feature type="chain" id="PRO_0000155090" description="Acetyl-CoA decarbonylase/synthase complex subunit epsilon">
    <location>
        <begin position="1"/>
        <end position="146"/>
    </location>
</feature>